<accession>Q9LHE4</accession>
<accession>A0A1I9LTB0</accession>
<feature type="chain" id="PRO_0000435117" description="Helicase-like transcription factor CHR27">
    <location>
        <begin position="1"/>
        <end position="1047"/>
    </location>
</feature>
<feature type="domain" description="Helicase ATP-binding" evidence="3">
    <location>
        <begin position="296"/>
        <end position="597"/>
    </location>
</feature>
<feature type="domain" description="Helicase C-terminal" evidence="4">
    <location>
        <begin position="887"/>
        <end position="1042"/>
    </location>
</feature>
<feature type="zinc finger region" description="RING-type; degenerate" evidence="2">
    <location>
        <begin position="751"/>
        <end position="790"/>
    </location>
</feature>
<feature type="region of interest" description="Disordered" evidence="5">
    <location>
        <begin position="1"/>
        <end position="89"/>
    </location>
</feature>
<feature type="region of interest" description="Disordered" evidence="5">
    <location>
        <begin position="103"/>
        <end position="130"/>
    </location>
</feature>
<feature type="region of interest" description="Disordered" evidence="5">
    <location>
        <begin position="145"/>
        <end position="174"/>
    </location>
</feature>
<feature type="region of interest" description="Disordered" evidence="5">
    <location>
        <begin position="349"/>
        <end position="407"/>
    </location>
</feature>
<feature type="region of interest" description="Disordered" evidence="5">
    <location>
        <begin position="511"/>
        <end position="533"/>
    </location>
</feature>
<feature type="region of interest" description="Disordered" evidence="5">
    <location>
        <begin position="851"/>
        <end position="873"/>
    </location>
</feature>
<feature type="compositionally biased region" description="Low complexity" evidence="5">
    <location>
        <begin position="1"/>
        <end position="11"/>
    </location>
</feature>
<feature type="compositionally biased region" description="Polar residues" evidence="5">
    <location>
        <begin position="52"/>
        <end position="88"/>
    </location>
</feature>
<feature type="compositionally biased region" description="Polar residues" evidence="5">
    <location>
        <begin position="118"/>
        <end position="128"/>
    </location>
</feature>
<feature type="compositionally biased region" description="Basic and acidic residues" evidence="5">
    <location>
        <begin position="354"/>
        <end position="368"/>
    </location>
</feature>
<feature type="compositionally biased region" description="Polar residues" evidence="5">
    <location>
        <begin position="370"/>
        <end position="379"/>
    </location>
</feature>
<feature type="compositionally biased region" description="Acidic residues" evidence="5">
    <location>
        <begin position="385"/>
        <end position="400"/>
    </location>
</feature>
<feature type="compositionally biased region" description="Basic residues" evidence="5">
    <location>
        <begin position="511"/>
        <end position="523"/>
    </location>
</feature>
<feature type="compositionally biased region" description="Polar residues" evidence="5">
    <location>
        <begin position="851"/>
        <end position="868"/>
    </location>
</feature>
<feature type="binding site" evidence="3">
    <location>
        <begin position="309"/>
        <end position="316"/>
    </location>
    <ligand>
        <name>ATP</name>
        <dbReference type="ChEBI" id="CHEBI:30616"/>
    </ligand>
</feature>
<name>CHR27_ARATH</name>
<organism>
    <name type="scientific">Arabidopsis thaliana</name>
    <name type="common">Mouse-ear cress</name>
    <dbReference type="NCBI Taxonomy" id="3702"/>
    <lineage>
        <taxon>Eukaryota</taxon>
        <taxon>Viridiplantae</taxon>
        <taxon>Streptophyta</taxon>
        <taxon>Embryophyta</taxon>
        <taxon>Tracheophyta</taxon>
        <taxon>Spermatophyta</taxon>
        <taxon>Magnoliopsida</taxon>
        <taxon>eudicotyledons</taxon>
        <taxon>Gunneridae</taxon>
        <taxon>Pentapetalae</taxon>
        <taxon>rosids</taxon>
        <taxon>malvids</taxon>
        <taxon>Brassicales</taxon>
        <taxon>Brassicaceae</taxon>
        <taxon>Camelineae</taxon>
        <taxon>Arabidopsis</taxon>
    </lineage>
</organism>
<evidence type="ECO:0000250" key="1">
    <source>
        <dbReference type="UniProtKB" id="Q9ZUL5"/>
    </source>
</evidence>
<evidence type="ECO:0000255" key="2">
    <source>
        <dbReference type="PROSITE-ProRule" id="PRU00175"/>
    </source>
</evidence>
<evidence type="ECO:0000255" key="3">
    <source>
        <dbReference type="PROSITE-ProRule" id="PRU00541"/>
    </source>
</evidence>
<evidence type="ECO:0000255" key="4">
    <source>
        <dbReference type="PROSITE-ProRule" id="PRU00542"/>
    </source>
</evidence>
<evidence type="ECO:0000256" key="5">
    <source>
        <dbReference type="SAM" id="MobiDB-lite"/>
    </source>
</evidence>
<evidence type="ECO:0000269" key="6">
    <source>
    </source>
</evidence>
<evidence type="ECO:0000269" key="7">
    <source>
    </source>
</evidence>
<evidence type="ECO:0000303" key="8">
    <source>
    </source>
</evidence>
<evidence type="ECO:0000303" key="9">
    <source>
    </source>
</evidence>
<evidence type="ECO:0000305" key="10"/>
<evidence type="ECO:0000312" key="11">
    <source>
        <dbReference type="Araport" id="AT3G20010"/>
    </source>
</evidence>
<evidence type="ECO:0000312" key="12">
    <source>
        <dbReference type="EMBL" id="BAB03166.1"/>
    </source>
</evidence>
<proteinExistence type="evidence at protein level"/>
<protein>
    <recommendedName>
        <fullName evidence="10">Helicase-like transcription factor CHR27</fullName>
        <ecNumber evidence="10">3.6.4.-</ecNumber>
    </recommendedName>
    <alternativeName>
        <fullName evidence="10">Protein CHROMATIN REMODELING 27</fullName>
    </alternativeName>
    <alternativeName>
        <fullName evidence="9">Protein SNF2-RING-HELICASE-LIKE 1</fullName>
    </alternativeName>
</protein>
<sequence>MDSAIEISSGSDSDDEVPPQPVWPQTRTRMDPTWLSRRPLPTVDSHARAEHTNQAPPNGASSDTSRPGVSKPFTGNGNTVNSRISSGSGADYVRLSSEQALKRTLPPSFNSPPLPARSGTNNISNASGSRVGVDYERPLSQQALKRTLPPSFNPPPLPSRSGTNNIRNAGGSRFGADYSHPAVSAVGNKSTFGDHYSGAHAEIGIQRGVNGVRILPPSLTHGTSASVLHHAGSSDPMHRFGGGEDRNPDNDERLVYQAALQVLNQPMTESDLPPGTLSVPLMRHQKIALAWMFQKETSSFNCPGGILADDQGLGKTVSTIALILKQKIVSQLKSESSCKQETEALVLDADDESDNAKHESGSHVKPELKVSSNSETSVLSACGNDENDSSDMEKAEDEEANSSTRAFQWKRPAAGTLIVCPASVVRQWARELDEKVSEESKLSVLVYHGSNRTKDPNELAEYDVVVTTYAIVTNEAPNKFLVDEDENDEKNTDRYGLASGFSNNKKRKVVVGASKKSKRRGRKSTNDTSSEPDCGPLGKVGWFRIVLDEAQTIKNYRTQMARSCCTLRAKRRWCLSGTPIQNTIDDLYSYFRFLRYDPYAVYKSFYSTIKVPISRNSCQGYKKLQAVLRAIMLRRTKGTLLDGKPIINLPPKVVNLSQVDFSVAERSFYKKLEADSRSQFKAYADAGTLSQNYANILLLLLRLRQACDHPQLVKRYNSDPVGKVSEAAVRRLPREARSRLINRLESSSAICYECNEPPEKPVVTLCGHIFCYECVLEYITGDENTCPVPRCKQQLARDVVFSESSLRNCTSDDSGCSSSHDNGLDRSVFQKRDFCSSKIKAVLDILQSLSQPDSPNSAQHGQMPSSSRPYDDDDVTIVEPMRLHSSSPSQGAVKTIIFSQWTGMLDLVELRILESGIEFRRLDGTMSLAARDRAVKEFSKKPDVKVMLMSLKAGNLGLNMVAACHVILLDLWWNPTTEDQAIDRAHRIGQTRPVTVTRITIKDTVEDRILKLQEEKRTMVASAFGEEHGGSSATRLTVDDLKYLFMV</sequence>
<reference key="1">
    <citation type="journal article" date="2000" name="DNA Res.">
        <title>Structural analysis of Arabidopsis thaliana chromosome 3. II. Sequence features of the 4,251,695 bp regions covered by 90 P1, TAC and BAC clones.</title>
        <authorList>
            <person name="Kaneko T."/>
            <person name="Katoh T."/>
            <person name="Sato S."/>
            <person name="Nakamura Y."/>
            <person name="Asamizu E."/>
            <person name="Tabata S."/>
        </authorList>
    </citation>
    <scope>NUCLEOTIDE SEQUENCE [LARGE SCALE GENOMIC DNA]</scope>
    <source>
        <strain>cv. Columbia</strain>
    </source>
</reference>
<reference key="2">
    <citation type="journal article" date="2017" name="Plant J.">
        <title>Araport11: a complete reannotation of the Arabidopsis thaliana reference genome.</title>
        <authorList>
            <person name="Cheng C.Y."/>
            <person name="Krishnakumar V."/>
            <person name="Chan A.P."/>
            <person name="Thibaud-Nissen F."/>
            <person name="Schobel S."/>
            <person name="Town C.D."/>
        </authorList>
    </citation>
    <scope>GENOME REANNOTATION</scope>
    <source>
        <strain>cv. Columbia</strain>
    </source>
</reference>
<reference key="3">
    <citation type="journal article" date="2014" name="Cell Res.">
        <title>SUVR2 is involved in transcriptional gene silencing by associating with SNF2-related chromatin-remodeling proteins in Arabidopsis.</title>
        <authorList>
            <person name="Han Y.F."/>
            <person name="Dou K."/>
            <person name="Ma Z.Y."/>
            <person name="Zhang S.W."/>
            <person name="Huang H.W."/>
            <person name="Li L."/>
            <person name="Cai T."/>
            <person name="Chen S."/>
            <person name="Zhu J.K."/>
            <person name="He X.J."/>
        </authorList>
    </citation>
    <scope>IDENTIFICATION BY MASS SPECTROMETRY</scope>
    <scope>FUNCTION</scope>
    <scope>SUBUNIT</scope>
    <scope>INTERACTION WITH SUVR2</scope>
</reference>
<reference key="4">
    <citation type="journal article" date="2014" name="Proc. Natl. Acad. Sci. U.S.A.">
        <title>SNF2 chromatin remodeler-family proteins FRG1 and -2 are required for RNA-directed DNA methylation.</title>
        <authorList>
            <person name="Groth M."/>
            <person name="Stroud H."/>
            <person name="Feng S."/>
            <person name="Greenberg M.V."/>
            <person name="Vashisht A.A."/>
            <person name="Wohlschlegel J.A."/>
            <person name="Jacobsen S.E."/>
            <person name="Ausin I."/>
        </authorList>
    </citation>
    <scope>IDENTIFICATION BY MASS SPECTROMETRY</scope>
    <scope>FUNCTION</scope>
    <scope>INTERACTION WITH SUVR2</scope>
</reference>
<dbReference type="EC" id="3.6.4.-" evidence="10"/>
<dbReference type="EMBL" id="AP002050">
    <property type="protein sequence ID" value="BAB03166.1"/>
    <property type="molecule type" value="Genomic_DNA"/>
</dbReference>
<dbReference type="EMBL" id="CP002686">
    <property type="protein sequence ID" value="AEE76318.1"/>
    <property type="molecule type" value="Genomic_DNA"/>
</dbReference>
<dbReference type="EMBL" id="CP002686">
    <property type="protein sequence ID" value="ANM65816.1"/>
    <property type="molecule type" value="Genomic_DNA"/>
</dbReference>
<dbReference type="EMBL" id="CP002686">
    <property type="protein sequence ID" value="ANM65818.1"/>
    <property type="molecule type" value="Genomic_DNA"/>
</dbReference>
<dbReference type="RefSeq" id="NP_001319598.1">
    <property type="nucleotide sequence ID" value="NM_001338440.1"/>
</dbReference>
<dbReference type="RefSeq" id="NP_001327760.1">
    <property type="nucleotide sequence ID" value="NM_001338444.1"/>
</dbReference>
<dbReference type="RefSeq" id="NP_188635.1">
    <property type="nucleotide sequence ID" value="NM_112891.3"/>
</dbReference>
<dbReference type="SMR" id="Q9LHE4"/>
<dbReference type="FunCoup" id="Q9LHE4">
    <property type="interactions" value="896"/>
</dbReference>
<dbReference type="STRING" id="3702.Q9LHE4"/>
<dbReference type="iPTMnet" id="Q9LHE4"/>
<dbReference type="PaxDb" id="3702-AT3G20010.1"/>
<dbReference type="ProteomicsDB" id="246962"/>
<dbReference type="EnsemblPlants" id="AT3G20010.1">
    <property type="protein sequence ID" value="AT3G20010.1"/>
    <property type="gene ID" value="AT3G20010"/>
</dbReference>
<dbReference type="EnsemblPlants" id="AT3G20010.5">
    <property type="protein sequence ID" value="AT3G20010.5"/>
    <property type="gene ID" value="AT3G20010"/>
</dbReference>
<dbReference type="EnsemblPlants" id="AT3G20010.7">
    <property type="protein sequence ID" value="AT3G20010.7"/>
    <property type="gene ID" value="AT3G20010"/>
</dbReference>
<dbReference type="GeneID" id="821539"/>
<dbReference type="Gramene" id="AT3G20010.1">
    <property type="protein sequence ID" value="AT3G20010.1"/>
    <property type="gene ID" value="AT3G20010"/>
</dbReference>
<dbReference type="Gramene" id="AT3G20010.5">
    <property type="protein sequence ID" value="AT3G20010.5"/>
    <property type="gene ID" value="AT3G20010"/>
</dbReference>
<dbReference type="Gramene" id="AT3G20010.7">
    <property type="protein sequence ID" value="AT3G20010.7"/>
    <property type="gene ID" value="AT3G20010"/>
</dbReference>
<dbReference type="KEGG" id="ath:AT3G20010"/>
<dbReference type="Araport" id="AT3G20010"/>
<dbReference type="TAIR" id="AT3G20010">
    <property type="gene designation" value="FRG1"/>
</dbReference>
<dbReference type="eggNOG" id="KOG1001">
    <property type="taxonomic scope" value="Eukaryota"/>
</dbReference>
<dbReference type="HOGENOM" id="CLU_000315_2_3_1"/>
<dbReference type="InParanoid" id="Q9LHE4"/>
<dbReference type="PhylomeDB" id="Q9LHE4"/>
<dbReference type="PRO" id="PR:Q9LHE4"/>
<dbReference type="Proteomes" id="UP000006548">
    <property type="component" value="Chromosome 3"/>
</dbReference>
<dbReference type="ExpressionAtlas" id="Q9LHE4">
    <property type="expression patterns" value="baseline and differential"/>
</dbReference>
<dbReference type="GO" id="GO:0005634">
    <property type="term" value="C:nucleus"/>
    <property type="evidence" value="ECO:0007669"/>
    <property type="project" value="UniProtKB-SubCell"/>
</dbReference>
<dbReference type="GO" id="GO:0005524">
    <property type="term" value="F:ATP binding"/>
    <property type="evidence" value="ECO:0007669"/>
    <property type="project" value="UniProtKB-KW"/>
</dbReference>
<dbReference type="GO" id="GO:0003677">
    <property type="term" value="F:DNA binding"/>
    <property type="evidence" value="ECO:0007669"/>
    <property type="project" value="UniProtKB-KW"/>
</dbReference>
<dbReference type="GO" id="GO:0004386">
    <property type="term" value="F:helicase activity"/>
    <property type="evidence" value="ECO:0007669"/>
    <property type="project" value="UniProtKB-KW"/>
</dbReference>
<dbReference type="GO" id="GO:0016787">
    <property type="term" value="F:hydrolase activity"/>
    <property type="evidence" value="ECO:0007669"/>
    <property type="project" value="UniProtKB-KW"/>
</dbReference>
<dbReference type="GO" id="GO:0008270">
    <property type="term" value="F:zinc ion binding"/>
    <property type="evidence" value="ECO:0007669"/>
    <property type="project" value="UniProtKB-KW"/>
</dbReference>
<dbReference type="GO" id="GO:0080188">
    <property type="term" value="P:gene silencing by siRNA-directed DNA methylation"/>
    <property type="evidence" value="ECO:0000316"/>
    <property type="project" value="TAIR"/>
</dbReference>
<dbReference type="CDD" id="cd18008">
    <property type="entry name" value="DEXDc_SHPRH-like"/>
    <property type="match status" value="1"/>
</dbReference>
<dbReference type="CDD" id="cd23142">
    <property type="entry name" value="RING-HC_CHR27-like"/>
    <property type="match status" value="1"/>
</dbReference>
<dbReference type="CDD" id="cd18793">
    <property type="entry name" value="SF2_C_SNF"/>
    <property type="match status" value="1"/>
</dbReference>
<dbReference type="FunFam" id="3.30.40.10:FF:000896">
    <property type="entry name" value="SNF2 domain-containing protein / helicase domain-containing protein / zinc finger protein-like protein"/>
    <property type="match status" value="1"/>
</dbReference>
<dbReference type="FunFam" id="3.40.50.10810:FF:000068">
    <property type="entry name" value="SNF2 domain-containing protein / helicase domain-containing protein / zinc finger protein-like protein"/>
    <property type="match status" value="1"/>
</dbReference>
<dbReference type="FunFam" id="3.40.50.10810:FF:000071">
    <property type="entry name" value="SNF2 domain-containing protein / helicase domain-containing protein / zinc finger protein-like protein"/>
    <property type="match status" value="1"/>
</dbReference>
<dbReference type="Gene3D" id="3.40.50.300">
    <property type="entry name" value="P-loop containing nucleotide triphosphate hydrolases"/>
    <property type="match status" value="1"/>
</dbReference>
<dbReference type="Gene3D" id="3.40.50.10810">
    <property type="entry name" value="Tandem AAA-ATPase domain"/>
    <property type="match status" value="3"/>
</dbReference>
<dbReference type="Gene3D" id="3.30.40.10">
    <property type="entry name" value="Zinc/RING finger domain, C3HC4 (zinc finger)"/>
    <property type="match status" value="1"/>
</dbReference>
<dbReference type="InterPro" id="IPR014001">
    <property type="entry name" value="Helicase_ATP-bd"/>
</dbReference>
<dbReference type="InterPro" id="IPR001650">
    <property type="entry name" value="Helicase_C-like"/>
</dbReference>
<dbReference type="InterPro" id="IPR027417">
    <property type="entry name" value="P-loop_NTPase"/>
</dbReference>
<dbReference type="InterPro" id="IPR038718">
    <property type="entry name" value="SNF2-like_sf"/>
</dbReference>
<dbReference type="InterPro" id="IPR049730">
    <property type="entry name" value="SNF2/RAD54-like_C"/>
</dbReference>
<dbReference type="InterPro" id="IPR000330">
    <property type="entry name" value="SNF2_N"/>
</dbReference>
<dbReference type="InterPro" id="IPR050628">
    <property type="entry name" value="SNF2_RAD54_helicase_TF"/>
</dbReference>
<dbReference type="InterPro" id="IPR018957">
    <property type="entry name" value="Znf_C3HC4_RING-type"/>
</dbReference>
<dbReference type="InterPro" id="IPR001841">
    <property type="entry name" value="Znf_RING"/>
</dbReference>
<dbReference type="InterPro" id="IPR013083">
    <property type="entry name" value="Znf_RING/FYVE/PHD"/>
</dbReference>
<dbReference type="InterPro" id="IPR017907">
    <property type="entry name" value="Znf_RING_CS"/>
</dbReference>
<dbReference type="PANTHER" id="PTHR45626:SF34">
    <property type="entry name" value="HELICASE-LIKE TRANSCRIPTION FACTOR CHR27"/>
    <property type="match status" value="1"/>
</dbReference>
<dbReference type="PANTHER" id="PTHR45626">
    <property type="entry name" value="TRANSCRIPTION TERMINATION FACTOR 2-RELATED"/>
    <property type="match status" value="1"/>
</dbReference>
<dbReference type="Pfam" id="PF00271">
    <property type="entry name" value="Helicase_C"/>
    <property type="match status" value="1"/>
</dbReference>
<dbReference type="Pfam" id="PF00176">
    <property type="entry name" value="SNF2-rel_dom"/>
    <property type="match status" value="1"/>
</dbReference>
<dbReference type="Pfam" id="PF00097">
    <property type="entry name" value="zf-C3HC4"/>
    <property type="match status" value="1"/>
</dbReference>
<dbReference type="SMART" id="SM00487">
    <property type="entry name" value="DEXDc"/>
    <property type="match status" value="1"/>
</dbReference>
<dbReference type="SMART" id="SM00490">
    <property type="entry name" value="HELICc"/>
    <property type="match status" value="1"/>
</dbReference>
<dbReference type="SUPFAM" id="SSF52540">
    <property type="entry name" value="P-loop containing nucleoside triphosphate hydrolases"/>
    <property type="match status" value="2"/>
</dbReference>
<dbReference type="SUPFAM" id="SSF57850">
    <property type="entry name" value="RING/U-box"/>
    <property type="match status" value="1"/>
</dbReference>
<dbReference type="PROSITE" id="PS51192">
    <property type="entry name" value="HELICASE_ATP_BIND_1"/>
    <property type="match status" value="1"/>
</dbReference>
<dbReference type="PROSITE" id="PS51194">
    <property type="entry name" value="HELICASE_CTER"/>
    <property type="match status" value="1"/>
</dbReference>
<dbReference type="PROSITE" id="PS00518">
    <property type="entry name" value="ZF_RING_1"/>
    <property type="match status" value="1"/>
</dbReference>
<dbReference type="PROSITE" id="PS50089">
    <property type="entry name" value="ZF_RING_2"/>
    <property type="match status" value="1"/>
</dbReference>
<gene>
    <name evidence="8" type="primary">CHR27</name>
    <name evidence="9" type="synonym">FRG1</name>
    <name evidence="11" type="ordered locus">At3g20010</name>
    <name evidence="12" type="ORF">MZE19.6</name>
</gene>
<comment type="function">
    <text evidence="6 7">Probable helicase-like transcription factor involved in transcriptional gene silencing. Associates with SUVR2 and contributes to transcriptional gene silencing at RNA-directed DNA methylation (RdDM) target loci but also at RdDM-independent target loci. May be involved in nucleosome positioning to form ordered nucleosome arrays on chromatin (PubMed:25420628). Associates with SUVR2 and functions redundantly with FRG2. Required for the efficient methylation of a broad range of RdDM target loci (PubMed:25425661).</text>
</comment>
<comment type="subunit">
    <text evidence="6 7">Interacts with SUVR2 (PubMed:25420628, PubMed:25425661). Interacts with itself (PubMed:25420628).</text>
</comment>
<comment type="subcellular location">
    <subcellularLocation>
        <location evidence="1">Nucleus</location>
    </subcellularLocation>
</comment>
<comment type="similarity">
    <text evidence="10">Belongs to the SNF2/RAD54 helicase family. RAD16 subfamily.</text>
</comment>
<keyword id="KW-0067">ATP-binding</keyword>
<keyword id="KW-0156">Chromatin regulator</keyword>
<keyword id="KW-0238">DNA-binding</keyword>
<keyword id="KW-0347">Helicase</keyword>
<keyword id="KW-0378">Hydrolase</keyword>
<keyword id="KW-0479">Metal-binding</keyword>
<keyword id="KW-0547">Nucleotide-binding</keyword>
<keyword id="KW-0539">Nucleus</keyword>
<keyword id="KW-1185">Reference proteome</keyword>
<keyword id="KW-0943">RNA-mediated gene silencing</keyword>
<keyword id="KW-0804">Transcription</keyword>
<keyword id="KW-0805">Transcription regulation</keyword>
<keyword id="KW-0862">Zinc</keyword>
<keyword id="KW-0863">Zinc-finger</keyword>